<evidence type="ECO:0000255" key="1"/>
<evidence type="ECO:0000255" key="2">
    <source>
        <dbReference type="PROSITE-ProRule" id="PRU00199"/>
    </source>
</evidence>
<evidence type="ECO:0000269" key="3">
    <source>
    </source>
</evidence>
<evidence type="ECO:0000303" key="4">
    <source>
    </source>
</evidence>
<evidence type="ECO:0000305" key="5"/>
<evidence type="ECO:0000305" key="6">
    <source>
    </source>
</evidence>
<evidence type="ECO:0000312" key="7">
    <source>
        <dbReference type="EMBL" id="ACF02750.1"/>
    </source>
</evidence>
<name>HPNN_RHOPT</name>
<proteinExistence type="evidence at protein level"/>
<dbReference type="EMBL" id="CP001096">
    <property type="protein sequence ID" value="ACF02750.1"/>
    <property type="molecule type" value="Genomic_DNA"/>
</dbReference>
<dbReference type="RefSeq" id="WP_012497127.1">
    <property type="nucleotide sequence ID" value="NC_011004.1"/>
</dbReference>
<dbReference type="SMR" id="B3QHB6"/>
<dbReference type="TCDB" id="2.A.6.7.5">
    <property type="family name" value="the resistance-nodulation-cell division (rnd) superfamily"/>
</dbReference>
<dbReference type="KEGG" id="rpt:Rpal_4254"/>
<dbReference type="HOGENOM" id="CLU_009099_0_0_5"/>
<dbReference type="OrthoDB" id="7518665at2"/>
<dbReference type="Proteomes" id="UP000001725">
    <property type="component" value="Chromosome"/>
</dbReference>
<dbReference type="GO" id="GO:0009279">
    <property type="term" value="C:cell outer membrane"/>
    <property type="evidence" value="ECO:0000315"/>
    <property type="project" value="CACAO"/>
</dbReference>
<dbReference type="GO" id="GO:0005886">
    <property type="term" value="C:plasma membrane"/>
    <property type="evidence" value="ECO:0007669"/>
    <property type="project" value="UniProtKB-SubCell"/>
</dbReference>
<dbReference type="GO" id="GO:0006869">
    <property type="term" value="P:lipid transport"/>
    <property type="evidence" value="ECO:0007669"/>
    <property type="project" value="UniProtKB-KW"/>
</dbReference>
<dbReference type="FunFam" id="1.20.1640.10:FF:000072">
    <property type="entry name" value="Hopanoid biosynthesis associated RND transporter like protein HpnN"/>
    <property type="match status" value="1"/>
</dbReference>
<dbReference type="FunFam" id="1.20.1640.10:FF:000088">
    <property type="entry name" value="Hopanoid biosynthesis associated RND transporter like protein HpnN"/>
    <property type="match status" value="1"/>
</dbReference>
<dbReference type="Gene3D" id="1.20.1640.10">
    <property type="entry name" value="Multidrug efflux transporter AcrB transmembrane domain"/>
    <property type="match status" value="2"/>
</dbReference>
<dbReference type="InterPro" id="IPR017841">
    <property type="entry name" value="Hopanoid_biosynth_HpnN"/>
</dbReference>
<dbReference type="InterPro" id="IPR004869">
    <property type="entry name" value="MMPL_dom"/>
</dbReference>
<dbReference type="InterPro" id="IPR050545">
    <property type="entry name" value="Mycobact_MmpL"/>
</dbReference>
<dbReference type="InterPro" id="IPR000731">
    <property type="entry name" value="SSD"/>
</dbReference>
<dbReference type="NCBIfam" id="TIGR03480">
    <property type="entry name" value="HpnN"/>
    <property type="match status" value="1"/>
</dbReference>
<dbReference type="PANTHER" id="PTHR33406">
    <property type="entry name" value="MEMBRANE PROTEIN MJ1562-RELATED"/>
    <property type="match status" value="1"/>
</dbReference>
<dbReference type="PANTHER" id="PTHR33406:SF13">
    <property type="entry name" value="MEMBRANE PROTEIN YDFJ"/>
    <property type="match status" value="1"/>
</dbReference>
<dbReference type="Pfam" id="PF03176">
    <property type="entry name" value="MMPL"/>
    <property type="match status" value="2"/>
</dbReference>
<dbReference type="SUPFAM" id="SSF82866">
    <property type="entry name" value="Multidrug efflux transporter AcrB transmembrane domain"/>
    <property type="match status" value="2"/>
</dbReference>
<dbReference type="PROSITE" id="PS50156">
    <property type="entry name" value="SSD"/>
    <property type="match status" value="1"/>
</dbReference>
<keyword id="KW-0997">Cell inner membrane</keyword>
<keyword id="KW-1003">Cell membrane</keyword>
<keyword id="KW-0445">Lipid transport</keyword>
<keyword id="KW-0472">Membrane</keyword>
<keyword id="KW-0812">Transmembrane</keyword>
<keyword id="KW-1133">Transmembrane helix</keyword>
<keyword id="KW-0813">Transport</keyword>
<organism>
    <name type="scientific">Rhodopseudomonas palustris (strain TIE-1)</name>
    <dbReference type="NCBI Taxonomy" id="395960"/>
    <lineage>
        <taxon>Bacteria</taxon>
        <taxon>Pseudomonadati</taxon>
        <taxon>Pseudomonadota</taxon>
        <taxon>Alphaproteobacteria</taxon>
        <taxon>Hyphomicrobiales</taxon>
        <taxon>Nitrobacteraceae</taxon>
        <taxon>Rhodopseudomonas</taxon>
    </lineage>
</organism>
<gene>
    <name evidence="4" type="primary">hpnN</name>
    <name evidence="7" type="ordered locus">Rpal_4254</name>
</gene>
<feature type="chain" id="PRO_0000457160" description="Hopanoid transporter HpnN">
    <location>
        <begin position="1"/>
        <end position="868"/>
    </location>
</feature>
<feature type="transmembrane region" description="Helical" evidence="1">
    <location>
        <begin position="16"/>
        <end position="36"/>
    </location>
</feature>
<feature type="transmembrane region" description="Helical" evidence="1">
    <location>
        <begin position="273"/>
        <end position="293"/>
    </location>
</feature>
<feature type="transmembrane region" description="Helical" evidence="1">
    <location>
        <begin position="298"/>
        <end position="318"/>
    </location>
</feature>
<feature type="transmembrane region" description="Helical" evidence="1">
    <location>
        <begin position="326"/>
        <end position="346"/>
    </location>
</feature>
<feature type="transmembrane region" description="Helical" evidence="1">
    <location>
        <begin position="370"/>
        <end position="390"/>
    </location>
</feature>
<feature type="transmembrane region" description="Helical" evidence="1">
    <location>
        <begin position="403"/>
        <end position="423"/>
    </location>
</feature>
<feature type="transmembrane region" description="Helical" evidence="1">
    <location>
        <begin position="452"/>
        <end position="472"/>
    </location>
</feature>
<feature type="transmembrane region" description="Helical" evidence="1">
    <location>
        <begin position="710"/>
        <end position="730"/>
    </location>
</feature>
<feature type="transmembrane region" description="Helical" evidence="1">
    <location>
        <begin position="740"/>
        <end position="760"/>
    </location>
</feature>
<feature type="transmembrane region" description="Helical" evidence="1">
    <location>
        <begin position="762"/>
        <end position="782"/>
    </location>
</feature>
<feature type="transmembrane region" description="Helical" evidence="1">
    <location>
        <begin position="805"/>
        <end position="825"/>
    </location>
</feature>
<feature type="transmembrane region" description="Helical" evidence="1">
    <location>
        <begin position="834"/>
        <end position="854"/>
    </location>
</feature>
<feature type="domain" description="SSD" evidence="2">
    <location>
        <begin position="299"/>
        <end position="425"/>
    </location>
</feature>
<accession>B3QHB6</accession>
<sequence length="868" mass="92768">MLKSAIVSIVRASTRFAAFTVLIGVFLAVAAGFYTYQHFGINTDINHLISSDLDWRKRDIAFEKAFDQERLILAVVEAPTPEFANAAAAKLTAELSKNNINFDSVKRLGGGPFFDRSGLLFLPKDEVAKATGQFQQAVPLIEIMAGDPSIRGLTAALETGLVGLKRGELTLDATAKPFNTVAATVEDVLGKQQAFFSWRGLVNPEPLTDGDKRAFIEVKPILDFKALEPGKAATDAIRQAAVDLKIEQDFGARVRLTGPVPIANEEFATVKDGAVVNGIGTVVVVLLILWMALHSSKIIFAVAANLVIGLSITTAVGLMLVDSLNLLSIAFAVLFVGLGVDFGIQFSVRYRSERHKTGDLEKALVQAAEYSAVPLSLAAMSTTAGFLSFLPTSYKGISELGEIAGAGMAIAFFTSITVLPALLKLLNPAGEKEPLGYAFLAPVDHFLEKHRIAIIVGTIGVALAGLPLLYFMHFDFNPINLRSPKVESIATFLDLRKDPNTGANAVNVMAPNEQAAREIEAKLAKLPQVSRTISLDTFVPPDQPEKLKLIQAGAKVLEPALNPEQIDPPPSDQDNIASLKSSAEALRRAAGEATGPGADASRRLATALTKLAGADQAMREKAQDVFVRPLLLDFELLRNMLKAQPVTLDNLPADIVSSWKTKDGQIRVEVLPSGDPNDNDTLRKFAAAVLQAEPLATGGPVSILKSGDTIVASFIQAGLWALLSISILLWITLRRISDVALTLVPLLVAGAVTLEICVLIDLPLNFANIVALPLLLGVGVAFKIYYVTAWRSGRTNLLQSALTRAIFFSALTTATAFGSLWLSSHPGTASMGKLLALSLLTTLGAVLLFQPALMGKPRHIDESGDTDL</sequence>
<protein>
    <recommendedName>
        <fullName evidence="5">Hopanoid transporter HpnN</fullName>
    </recommendedName>
</protein>
<reference key="1">
    <citation type="submission" date="2008-05" db="EMBL/GenBank/DDBJ databases">
        <title>Complete sequence of Rhodopseudomonas palustris TIE-1.</title>
        <authorList>
            <consortium name="US DOE Joint Genome Institute"/>
            <person name="Lucas S."/>
            <person name="Copeland A."/>
            <person name="Lapidus A."/>
            <person name="Glavina del Rio T."/>
            <person name="Dalin E."/>
            <person name="Tice H."/>
            <person name="Pitluck S."/>
            <person name="Chain P."/>
            <person name="Malfatti S."/>
            <person name="Shin M."/>
            <person name="Vergez L."/>
            <person name="Lang D."/>
            <person name="Schmutz J."/>
            <person name="Larimer F."/>
            <person name="Land M."/>
            <person name="Hauser L."/>
            <person name="Kyrpides N."/>
            <person name="Mikhailova N."/>
            <person name="Emerson D."/>
            <person name="Newman D.K."/>
            <person name="Roden E."/>
            <person name="Richardson P."/>
        </authorList>
    </citation>
    <scope>NUCLEOTIDE SEQUENCE [LARGE SCALE GENOMIC DNA]</scope>
    <source>
        <strain>TIE-1</strain>
    </source>
</reference>
<reference key="2">
    <citation type="journal article" date="2011" name="Proc. Natl. Acad. Sci. U.S.A.">
        <title>The RND-family transporter, HpnN, is required for hopanoid localization to the outer membrane of Rhodopseudomonas palustris TIE-1.</title>
        <authorList>
            <person name="Doughty D.M."/>
            <person name="Coleman M.L."/>
            <person name="Hunter R.C."/>
            <person name="Sessions A.L."/>
            <person name="Summons R.E."/>
            <person name="Newman D.K."/>
        </authorList>
    </citation>
    <scope>FUNCTION IN HOPANOID TRANSPORT</scope>
    <scope>DISRUPTION PHENOTYPE</scope>
    <source>
        <strain>TIE-1</strain>
    </source>
</reference>
<comment type="function">
    <text evidence="3">Essential for hopanoid transport from the cytoplasmic to the outer membrane (PubMed:21873238). Required for the C(35) hopanoid, bacteriohopanetetrol, to remain localized to the mother cell type (PubMed:21873238).</text>
</comment>
<comment type="subcellular location">
    <subcellularLocation>
        <location evidence="6">Cell inner membrane</location>
        <topology evidence="1">Multi-pass membrane protein</topology>
    </subcellularLocation>
</comment>
<comment type="disruption phenotype">
    <text evidence="3">Deletion mutant no longer contains any hopanoids in the outer membrane, and contains elevated concentrations of hopanoids in the cytoplasmic and inner cytoplasmic membrane fractions (PubMed:21873238). Total hopanoid abundance is unchanged (PubMed:21873238). Deletion mutant grows like the wild-type strain and forms single cells when grown at 30 degrees Celsius, but grows slower and shows a filamentation phenotype at 38 degrees Celsius, suggesting that cell division is affected (PubMed:21873238).</text>
</comment>
<comment type="similarity">
    <text evidence="5">Belongs to the resistance-nodulation-cell division (RND) (TC 2.A.6) family. MmpL subfamily.</text>
</comment>